<reference key="1">
    <citation type="journal article" date="2000" name="J. Virol.">
        <title>The genome of fowlpox virus.</title>
        <authorList>
            <person name="Afonso C.L."/>
            <person name="Tulman E.R."/>
            <person name="Lu Z."/>
            <person name="Zsak L."/>
            <person name="Kutish G.F."/>
            <person name="Rock D.L."/>
        </authorList>
    </citation>
    <scope>NUCLEOTIDE SEQUENCE [LARGE SCALE GENOMIC DNA]</scope>
</reference>
<feature type="chain" id="PRO_0000067130" description="Putative ankyrin repeat protein FPV244">
    <location>
        <begin position="1"/>
        <end position="668"/>
    </location>
</feature>
<feature type="repeat" description="ANK 1">
    <location>
        <begin position="40"/>
        <end position="69"/>
    </location>
</feature>
<feature type="repeat" description="ANK 2">
    <location>
        <begin position="144"/>
        <end position="173"/>
    </location>
</feature>
<feature type="repeat" description="ANK 3">
    <location>
        <begin position="177"/>
        <end position="206"/>
    </location>
</feature>
<feature type="repeat" description="ANK 4">
    <location>
        <begin position="210"/>
        <end position="239"/>
    </location>
</feature>
<feature type="repeat" description="ANK 5">
    <location>
        <begin position="272"/>
        <end position="302"/>
    </location>
</feature>
<feature type="repeat" description="ANK 6">
    <location>
        <begin position="306"/>
        <end position="336"/>
    </location>
</feature>
<feature type="repeat" description="ANK 7">
    <location>
        <begin position="340"/>
        <end position="370"/>
    </location>
</feature>
<feature type="repeat" description="ANK 8">
    <location>
        <begin position="374"/>
        <end position="403"/>
    </location>
</feature>
<feature type="repeat" description="ANK 9">
    <location>
        <begin position="407"/>
        <end position="437"/>
    </location>
</feature>
<feature type="repeat" description="ANK 10">
    <location>
        <begin position="441"/>
        <end position="471"/>
    </location>
</feature>
<feature type="repeat" description="ANK 11">
    <location>
        <begin position="473"/>
        <end position="502"/>
    </location>
</feature>
<feature type="repeat" description="ANK 12">
    <location>
        <begin position="571"/>
        <end position="602"/>
    </location>
</feature>
<accession>Q9J4Z6</accession>
<name>V244_FOWPN</name>
<keyword id="KW-0040">ANK repeat</keyword>
<keyword id="KW-1185">Reference proteome</keyword>
<keyword id="KW-0677">Repeat</keyword>
<dbReference type="EMBL" id="AF198100">
    <property type="protein sequence ID" value="AAF44588.1"/>
    <property type="molecule type" value="Genomic_DNA"/>
</dbReference>
<dbReference type="RefSeq" id="NP_039207.1">
    <property type="nucleotide sequence ID" value="NC_002188.1"/>
</dbReference>
<dbReference type="SMR" id="Q9J4Z6"/>
<dbReference type="GeneID" id="1486816"/>
<dbReference type="KEGG" id="vg:1486816"/>
<dbReference type="Proteomes" id="UP000008597">
    <property type="component" value="Segment"/>
</dbReference>
<dbReference type="Gene3D" id="1.25.40.20">
    <property type="entry name" value="Ankyrin repeat-containing domain"/>
    <property type="match status" value="4"/>
</dbReference>
<dbReference type="InterPro" id="IPR002110">
    <property type="entry name" value="Ankyrin_rpt"/>
</dbReference>
<dbReference type="InterPro" id="IPR036770">
    <property type="entry name" value="Ankyrin_rpt-contain_sf"/>
</dbReference>
<dbReference type="InterPro" id="IPR018272">
    <property type="entry name" value="PRANC_domain"/>
</dbReference>
<dbReference type="PANTHER" id="PTHR24198">
    <property type="entry name" value="ANKYRIN REPEAT AND PROTEIN KINASE DOMAIN-CONTAINING PROTEIN"/>
    <property type="match status" value="1"/>
</dbReference>
<dbReference type="PANTHER" id="PTHR24198:SF165">
    <property type="entry name" value="ANKYRIN REPEAT-CONTAINING PROTEIN-RELATED"/>
    <property type="match status" value="1"/>
</dbReference>
<dbReference type="Pfam" id="PF00023">
    <property type="entry name" value="Ank"/>
    <property type="match status" value="1"/>
</dbReference>
<dbReference type="Pfam" id="PF12796">
    <property type="entry name" value="Ank_2"/>
    <property type="match status" value="3"/>
</dbReference>
<dbReference type="Pfam" id="PF09372">
    <property type="entry name" value="PRANC"/>
    <property type="match status" value="1"/>
</dbReference>
<dbReference type="PRINTS" id="PR01415">
    <property type="entry name" value="ANKYRIN"/>
</dbReference>
<dbReference type="SMART" id="SM00248">
    <property type="entry name" value="ANK"/>
    <property type="match status" value="11"/>
</dbReference>
<dbReference type="SUPFAM" id="SSF48403">
    <property type="entry name" value="Ankyrin repeat"/>
    <property type="match status" value="2"/>
</dbReference>
<dbReference type="PROSITE" id="PS50297">
    <property type="entry name" value="ANK_REP_REGION"/>
    <property type="match status" value="1"/>
</dbReference>
<dbReference type="PROSITE" id="PS50088">
    <property type="entry name" value="ANK_REPEAT"/>
    <property type="match status" value="7"/>
</dbReference>
<organismHost>
    <name type="scientific">Vertebrata</name>
    <dbReference type="NCBI Taxonomy" id="7742"/>
</organismHost>
<gene>
    <name type="ordered locus">FPV244</name>
</gene>
<protein>
    <recommendedName>
        <fullName>Putative ankyrin repeat protein FPV244</fullName>
    </recommendedName>
</protein>
<organism>
    <name type="scientific">Fowlpox virus (strain NVSL)</name>
    <name type="common">FPV</name>
    <dbReference type="NCBI Taxonomy" id="928301"/>
    <lineage>
        <taxon>Viruses</taxon>
        <taxon>Varidnaviria</taxon>
        <taxon>Bamfordvirae</taxon>
        <taxon>Nucleocytoviricota</taxon>
        <taxon>Pokkesviricetes</taxon>
        <taxon>Chitovirales</taxon>
        <taxon>Poxviridae</taxon>
        <taxon>Chordopoxvirinae</taxon>
        <taxon>Avipoxvirus</taxon>
        <taxon>Fowlpox virus</taxon>
    </lineage>
</organism>
<proteinExistence type="predicted"/>
<sequence>MWPDDLYRIMCRGNYIEILSAITNYNLHKHGANQCENESIPFTAIHQALQLRQIDIVKELIQQNPKLIYVTDHRRNSTLHTICITPNVMDIVISLTVDCDIILDIKYASIILNKHKLGEACIHVLKEGISGNEISYNKINKSIEYMKLIKERIQQDELLIAEMLLKKGIDVNAKDVYCRTPIHYAAERGNTKMVNLLLSYGADVNIITLDDLSVLEYAVDSKNIDTIKAIIDNRSNINKNDLSLLKAIRNTDLETSLLLYDSGFSVNSIDVYKNTPLHYAVQAPSLSRLVPKLLERGIDVNAKNIKGETPLYLMAKNGYDTENIRTLIMRGADVNAADSLYITPLHQASTLDRYKDTVITLLELGANVNARDYCDKTPIHYAAVRNNVVIINTLLDYGADIEALSQKIGTVLHFALYGTNPYMSVKTLIDRGANVNSKNKYLSTPLHYACKKNCKPEVIKMLLDNGADVNAINIRNQYPLLIALEYHGIVNILLHYGAELRDSRVLHKSLNSNMFSFRYIIAHICIQDFIRHDIRSEVNPLREIIQSDDTFKSIWLSCKEELKDISKIRINMFYSLDIFVISKNMNLLHHLVNNPIIKEINTYYFYNYGDRLKTSISLASNRHKILEKSRSKLDEILDSSGWSKLPPDIKLSILEFIGNTELRKICNR</sequence>